<gene>
    <name evidence="1" type="primary">proB</name>
    <name type="ordered locus">DSY1386</name>
</gene>
<sequence>MSDLRRIVIKVGSSSLNHPEGGLDDQAIQRIAGVIAGIRQLGVECVLVSSGAVAAGVGKLGLKTKPKDMAGKQAVAAVGQGVLIEKYALALEARGLVCAQVLLSRLDLAEASRYRNAQNTLEQLLRYQVIPIINENDTVAVEELCFGDNDRLSALVAGLVHGDLLVILTDVDGLYSANPKLNPQAELIEEVEDLTQVMHIAGGAGSSMGTGGMVTKLKAAEITTRFGMGMFLLHSKRMEEIIELIQGERPLGTYFFPAAHRIMGKKRWIAYGGLSEGSIFIDEGAVKALLKGKSLLASGITGIDGVWERKELVRINNPDGIEVARGLVELSSEELEKVRGKHSEEMLATIPNLEGEEVVHRDNMTLMIE</sequence>
<proteinExistence type="inferred from homology"/>
<keyword id="KW-0028">Amino-acid biosynthesis</keyword>
<keyword id="KW-0067">ATP-binding</keyword>
<keyword id="KW-0963">Cytoplasm</keyword>
<keyword id="KW-0418">Kinase</keyword>
<keyword id="KW-0547">Nucleotide-binding</keyword>
<keyword id="KW-0641">Proline biosynthesis</keyword>
<keyword id="KW-1185">Reference proteome</keyword>
<keyword id="KW-0808">Transferase</keyword>
<accession>Q24XR7</accession>
<dbReference type="EC" id="2.7.2.11" evidence="1"/>
<dbReference type="EMBL" id="AP008230">
    <property type="protein sequence ID" value="BAE83175.1"/>
    <property type="molecule type" value="Genomic_DNA"/>
</dbReference>
<dbReference type="RefSeq" id="WP_005816693.1">
    <property type="nucleotide sequence ID" value="NC_007907.1"/>
</dbReference>
<dbReference type="SMR" id="Q24XR7"/>
<dbReference type="STRING" id="138119.DSY1386"/>
<dbReference type="KEGG" id="dsy:DSY1386"/>
<dbReference type="eggNOG" id="COG0263">
    <property type="taxonomic scope" value="Bacteria"/>
</dbReference>
<dbReference type="HOGENOM" id="CLU_025400_2_0_9"/>
<dbReference type="UniPathway" id="UPA00098">
    <property type="reaction ID" value="UER00359"/>
</dbReference>
<dbReference type="Proteomes" id="UP000001946">
    <property type="component" value="Chromosome"/>
</dbReference>
<dbReference type="GO" id="GO:0005829">
    <property type="term" value="C:cytosol"/>
    <property type="evidence" value="ECO:0007669"/>
    <property type="project" value="TreeGrafter"/>
</dbReference>
<dbReference type="GO" id="GO:0005524">
    <property type="term" value="F:ATP binding"/>
    <property type="evidence" value="ECO:0007669"/>
    <property type="project" value="UniProtKB-KW"/>
</dbReference>
<dbReference type="GO" id="GO:0004349">
    <property type="term" value="F:glutamate 5-kinase activity"/>
    <property type="evidence" value="ECO:0007669"/>
    <property type="project" value="UniProtKB-UniRule"/>
</dbReference>
<dbReference type="GO" id="GO:0003723">
    <property type="term" value="F:RNA binding"/>
    <property type="evidence" value="ECO:0007669"/>
    <property type="project" value="InterPro"/>
</dbReference>
<dbReference type="GO" id="GO:0055129">
    <property type="term" value="P:L-proline biosynthetic process"/>
    <property type="evidence" value="ECO:0007669"/>
    <property type="project" value="UniProtKB-UniRule"/>
</dbReference>
<dbReference type="CDD" id="cd04242">
    <property type="entry name" value="AAK_G5K_ProB"/>
    <property type="match status" value="1"/>
</dbReference>
<dbReference type="CDD" id="cd21157">
    <property type="entry name" value="PUA_G5K"/>
    <property type="match status" value="1"/>
</dbReference>
<dbReference type="FunFam" id="3.40.1160.10:FF:000018">
    <property type="entry name" value="Glutamate 5-kinase"/>
    <property type="match status" value="1"/>
</dbReference>
<dbReference type="Gene3D" id="3.40.1160.10">
    <property type="entry name" value="Acetylglutamate kinase-like"/>
    <property type="match status" value="1"/>
</dbReference>
<dbReference type="Gene3D" id="2.30.130.10">
    <property type="entry name" value="PUA domain"/>
    <property type="match status" value="1"/>
</dbReference>
<dbReference type="HAMAP" id="MF_00456">
    <property type="entry name" value="ProB"/>
    <property type="match status" value="1"/>
</dbReference>
<dbReference type="InterPro" id="IPR036393">
    <property type="entry name" value="AceGlu_kinase-like_sf"/>
</dbReference>
<dbReference type="InterPro" id="IPR001048">
    <property type="entry name" value="Asp/Glu/Uridylate_kinase"/>
</dbReference>
<dbReference type="InterPro" id="IPR041739">
    <property type="entry name" value="G5K_ProB"/>
</dbReference>
<dbReference type="InterPro" id="IPR001057">
    <property type="entry name" value="Glu/AcGlu_kinase"/>
</dbReference>
<dbReference type="InterPro" id="IPR011529">
    <property type="entry name" value="Glu_5kinase"/>
</dbReference>
<dbReference type="InterPro" id="IPR005715">
    <property type="entry name" value="Glu_5kinase/COase_Synthase"/>
</dbReference>
<dbReference type="InterPro" id="IPR002478">
    <property type="entry name" value="PUA"/>
</dbReference>
<dbReference type="InterPro" id="IPR015947">
    <property type="entry name" value="PUA-like_sf"/>
</dbReference>
<dbReference type="InterPro" id="IPR036974">
    <property type="entry name" value="PUA_sf"/>
</dbReference>
<dbReference type="NCBIfam" id="TIGR01027">
    <property type="entry name" value="proB"/>
    <property type="match status" value="1"/>
</dbReference>
<dbReference type="PANTHER" id="PTHR43654">
    <property type="entry name" value="GLUTAMATE 5-KINASE"/>
    <property type="match status" value="1"/>
</dbReference>
<dbReference type="PANTHER" id="PTHR43654:SF1">
    <property type="entry name" value="ISOPENTENYL PHOSPHATE KINASE"/>
    <property type="match status" value="1"/>
</dbReference>
<dbReference type="Pfam" id="PF00696">
    <property type="entry name" value="AA_kinase"/>
    <property type="match status" value="1"/>
</dbReference>
<dbReference type="Pfam" id="PF01472">
    <property type="entry name" value="PUA"/>
    <property type="match status" value="1"/>
</dbReference>
<dbReference type="PIRSF" id="PIRSF000729">
    <property type="entry name" value="GK"/>
    <property type="match status" value="1"/>
</dbReference>
<dbReference type="PRINTS" id="PR00474">
    <property type="entry name" value="GLU5KINASE"/>
</dbReference>
<dbReference type="SMART" id="SM00359">
    <property type="entry name" value="PUA"/>
    <property type="match status" value="1"/>
</dbReference>
<dbReference type="SUPFAM" id="SSF53633">
    <property type="entry name" value="Carbamate kinase-like"/>
    <property type="match status" value="1"/>
</dbReference>
<dbReference type="SUPFAM" id="SSF88697">
    <property type="entry name" value="PUA domain-like"/>
    <property type="match status" value="1"/>
</dbReference>
<dbReference type="PROSITE" id="PS50890">
    <property type="entry name" value="PUA"/>
    <property type="match status" value="1"/>
</dbReference>
<reference key="1">
    <citation type="journal article" date="2006" name="J. Bacteriol.">
        <title>Complete genome sequence of the dehalorespiring bacterium Desulfitobacterium hafniense Y51 and comparison with Dehalococcoides ethenogenes 195.</title>
        <authorList>
            <person name="Nonaka H."/>
            <person name="Keresztes G."/>
            <person name="Shinoda Y."/>
            <person name="Ikenaga Y."/>
            <person name="Abe M."/>
            <person name="Naito K."/>
            <person name="Inatomi K."/>
            <person name="Furukawa K."/>
            <person name="Inui M."/>
            <person name="Yukawa H."/>
        </authorList>
    </citation>
    <scope>NUCLEOTIDE SEQUENCE [LARGE SCALE GENOMIC DNA]</scope>
    <source>
        <strain>Y51</strain>
    </source>
</reference>
<comment type="function">
    <text evidence="1">Catalyzes the transfer of a phosphate group to glutamate to form L-glutamate 5-phosphate.</text>
</comment>
<comment type="catalytic activity">
    <reaction evidence="1">
        <text>L-glutamate + ATP = L-glutamyl 5-phosphate + ADP</text>
        <dbReference type="Rhea" id="RHEA:14877"/>
        <dbReference type="ChEBI" id="CHEBI:29985"/>
        <dbReference type="ChEBI" id="CHEBI:30616"/>
        <dbReference type="ChEBI" id="CHEBI:58274"/>
        <dbReference type="ChEBI" id="CHEBI:456216"/>
        <dbReference type="EC" id="2.7.2.11"/>
    </reaction>
</comment>
<comment type="pathway">
    <text evidence="1">Amino-acid biosynthesis; L-proline biosynthesis; L-glutamate 5-semialdehyde from L-glutamate: step 1/2.</text>
</comment>
<comment type="subcellular location">
    <subcellularLocation>
        <location evidence="1">Cytoplasm</location>
    </subcellularLocation>
</comment>
<comment type="similarity">
    <text evidence="1">Belongs to the glutamate 5-kinase family.</text>
</comment>
<evidence type="ECO:0000255" key="1">
    <source>
        <dbReference type="HAMAP-Rule" id="MF_00456"/>
    </source>
</evidence>
<feature type="chain" id="PRO_0000252977" description="Glutamate 5-kinase">
    <location>
        <begin position="1"/>
        <end position="369"/>
    </location>
</feature>
<feature type="domain" description="PUA" evidence="1">
    <location>
        <begin position="276"/>
        <end position="349"/>
    </location>
</feature>
<feature type="binding site" evidence="1">
    <location>
        <position position="10"/>
    </location>
    <ligand>
        <name>ATP</name>
        <dbReference type="ChEBI" id="CHEBI:30616"/>
    </ligand>
</feature>
<feature type="binding site" evidence="1">
    <location>
        <position position="50"/>
    </location>
    <ligand>
        <name>substrate</name>
    </ligand>
</feature>
<feature type="binding site" evidence="1">
    <location>
        <position position="137"/>
    </location>
    <ligand>
        <name>substrate</name>
    </ligand>
</feature>
<feature type="binding site" evidence="1">
    <location>
        <position position="149"/>
    </location>
    <ligand>
        <name>substrate</name>
    </ligand>
</feature>
<feature type="binding site" evidence="1">
    <location>
        <begin position="169"/>
        <end position="170"/>
    </location>
    <ligand>
        <name>ATP</name>
        <dbReference type="ChEBI" id="CHEBI:30616"/>
    </ligand>
</feature>
<feature type="binding site" evidence="1">
    <location>
        <begin position="210"/>
        <end position="216"/>
    </location>
    <ligand>
        <name>ATP</name>
        <dbReference type="ChEBI" id="CHEBI:30616"/>
    </ligand>
</feature>
<protein>
    <recommendedName>
        <fullName evidence="1">Glutamate 5-kinase</fullName>
        <ecNumber evidence="1">2.7.2.11</ecNumber>
    </recommendedName>
    <alternativeName>
        <fullName evidence="1">Gamma-glutamyl kinase</fullName>
        <shortName evidence="1">GK</shortName>
    </alternativeName>
</protein>
<name>PROB_DESHY</name>
<organism>
    <name type="scientific">Desulfitobacterium hafniense (strain Y51)</name>
    <dbReference type="NCBI Taxonomy" id="138119"/>
    <lineage>
        <taxon>Bacteria</taxon>
        <taxon>Bacillati</taxon>
        <taxon>Bacillota</taxon>
        <taxon>Clostridia</taxon>
        <taxon>Eubacteriales</taxon>
        <taxon>Desulfitobacteriaceae</taxon>
        <taxon>Desulfitobacterium</taxon>
    </lineage>
</organism>